<sequence length="263" mass="29415">MRRIGLEALERVLYPVIPVVVTAEHQGRVGGMLAAWWMQASFTPPILAVAIAPERYTYKLVRESGVFAFNLLDFKLVDKAPFLGDVSERLLPGKIREAGLNIVRGEVLGAPLIAEASAAVELELVDVVEAGDHDVFLGEAKAVYTVDDFRGGMWSLETYRPLMYLGRTRRPGPVYRVYLTPRGWERREIEFAGGKLKPLAEKRVRLISRVEEAVKASSSREEAVDAVRRILSEEGLDPSDAEYLVEDALRRAKSYRRRGQSSS</sequence>
<accession>Q9Y8Q3</accession>
<protein>
    <recommendedName>
        <fullName>Uncharacterized protein APE_2580</fullName>
    </recommendedName>
</protein>
<feature type="chain" id="PRO_0000085526" description="Uncharacterized protein APE_2580">
    <location>
        <begin position="1"/>
        <end position="263"/>
    </location>
</feature>
<dbReference type="EMBL" id="BA000002">
    <property type="protein sequence ID" value="BAA81597.1"/>
    <property type="molecule type" value="Genomic_DNA"/>
</dbReference>
<dbReference type="PIR" id="E72492">
    <property type="entry name" value="E72492"/>
</dbReference>
<dbReference type="RefSeq" id="WP_010867095.1">
    <property type="nucleotide sequence ID" value="NC_000854.2"/>
</dbReference>
<dbReference type="SMR" id="Q9Y8Q3"/>
<dbReference type="STRING" id="272557.APE_2580"/>
<dbReference type="EnsemblBacteria" id="BAA81597">
    <property type="protein sequence ID" value="BAA81597"/>
    <property type="gene ID" value="APE_2580"/>
</dbReference>
<dbReference type="GeneID" id="1445512"/>
<dbReference type="KEGG" id="ape:APE_2580"/>
<dbReference type="eggNOG" id="arCOG02016">
    <property type="taxonomic scope" value="Archaea"/>
</dbReference>
<dbReference type="Proteomes" id="UP000002518">
    <property type="component" value="Chromosome"/>
</dbReference>
<dbReference type="GO" id="GO:0010181">
    <property type="term" value="F:FMN binding"/>
    <property type="evidence" value="ECO:0007669"/>
    <property type="project" value="InterPro"/>
</dbReference>
<dbReference type="Gene3D" id="2.30.110.10">
    <property type="entry name" value="Electron Transport, Fmn-binding Protein, Chain A"/>
    <property type="match status" value="1"/>
</dbReference>
<dbReference type="InterPro" id="IPR002563">
    <property type="entry name" value="Flavin_Rdtase-like_dom"/>
</dbReference>
<dbReference type="InterPro" id="IPR053310">
    <property type="entry name" value="Flavoredoxin-like"/>
</dbReference>
<dbReference type="InterPro" id="IPR012349">
    <property type="entry name" value="Split_barrel_FMN-bd"/>
</dbReference>
<dbReference type="PANTHER" id="PTHR43241">
    <property type="entry name" value="FLAVIN REDUCTASE DOMAIN PROTEIN"/>
    <property type="match status" value="1"/>
</dbReference>
<dbReference type="PANTHER" id="PTHR43241:SF1">
    <property type="entry name" value="FLAVIN REDUCTASE LIKE DOMAIN-CONTAINING PROTEIN"/>
    <property type="match status" value="1"/>
</dbReference>
<dbReference type="Pfam" id="PF01613">
    <property type="entry name" value="Flavin_Reduct"/>
    <property type="match status" value="1"/>
</dbReference>
<dbReference type="SMART" id="SM00903">
    <property type="entry name" value="Flavin_Reduct"/>
    <property type="match status" value="1"/>
</dbReference>
<dbReference type="SUPFAM" id="SSF50475">
    <property type="entry name" value="FMN-binding split barrel"/>
    <property type="match status" value="1"/>
</dbReference>
<reference key="1">
    <citation type="journal article" date="1999" name="DNA Res.">
        <title>Complete genome sequence of an aerobic hyper-thermophilic crenarchaeon, Aeropyrum pernix K1.</title>
        <authorList>
            <person name="Kawarabayasi Y."/>
            <person name="Hino Y."/>
            <person name="Horikawa H."/>
            <person name="Yamazaki S."/>
            <person name="Haikawa Y."/>
            <person name="Jin-no K."/>
            <person name="Takahashi M."/>
            <person name="Sekine M."/>
            <person name="Baba S."/>
            <person name="Ankai A."/>
            <person name="Kosugi H."/>
            <person name="Hosoyama A."/>
            <person name="Fukui S."/>
            <person name="Nagai Y."/>
            <person name="Nishijima K."/>
            <person name="Nakazawa H."/>
            <person name="Takamiya M."/>
            <person name="Masuda S."/>
            <person name="Funahashi T."/>
            <person name="Tanaka T."/>
            <person name="Kudoh Y."/>
            <person name="Yamazaki J."/>
            <person name="Kushida N."/>
            <person name="Oguchi A."/>
            <person name="Aoki K."/>
            <person name="Kubota K."/>
            <person name="Nakamura Y."/>
            <person name="Nomura N."/>
            <person name="Sako Y."/>
            <person name="Kikuchi H."/>
        </authorList>
    </citation>
    <scope>NUCLEOTIDE SEQUENCE [LARGE SCALE GENOMIC DNA]</scope>
    <source>
        <strain>ATCC 700893 / DSM 11879 / JCM 9820 / NBRC 100138 / K1</strain>
    </source>
</reference>
<proteinExistence type="inferred from homology"/>
<name>Y2580_AERPE</name>
<organism>
    <name type="scientific">Aeropyrum pernix (strain ATCC 700893 / DSM 11879 / JCM 9820 / NBRC 100138 / K1)</name>
    <dbReference type="NCBI Taxonomy" id="272557"/>
    <lineage>
        <taxon>Archaea</taxon>
        <taxon>Thermoproteota</taxon>
        <taxon>Thermoprotei</taxon>
        <taxon>Desulfurococcales</taxon>
        <taxon>Desulfurococcaceae</taxon>
        <taxon>Aeropyrum</taxon>
    </lineage>
</organism>
<evidence type="ECO:0000250" key="1"/>
<evidence type="ECO:0000305" key="2"/>
<keyword id="KW-0285">Flavoprotein</keyword>
<keyword id="KW-0288">FMN</keyword>
<keyword id="KW-1185">Reference proteome</keyword>
<comment type="cofactor">
    <cofactor evidence="1">
        <name>FMN</name>
        <dbReference type="ChEBI" id="CHEBI:58210"/>
    </cofactor>
</comment>
<comment type="similarity">
    <text evidence="2">Belongs to the flavoredoxin family.</text>
</comment>
<gene>
    <name type="ordered locus">APE_2580</name>
</gene>